<organism>
    <name type="scientific">Porphyromonas gingivalis (strain ATCC BAA-308 / W83)</name>
    <dbReference type="NCBI Taxonomy" id="242619"/>
    <lineage>
        <taxon>Bacteria</taxon>
        <taxon>Pseudomonadati</taxon>
        <taxon>Bacteroidota</taxon>
        <taxon>Bacteroidia</taxon>
        <taxon>Bacteroidales</taxon>
        <taxon>Porphyromonadaceae</taxon>
        <taxon>Porphyromonas</taxon>
    </lineage>
</organism>
<proteinExistence type="inferred from homology"/>
<dbReference type="EC" id="3.1.3.5" evidence="1"/>
<dbReference type="EMBL" id="AE015924">
    <property type="protein sequence ID" value="AAQ67113.1"/>
    <property type="molecule type" value="Genomic_DNA"/>
</dbReference>
<dbReference type="RefSeq" id="WP_004583692.1">
    <property type="nucleotide sequence ID" value="NC_002950.2"/>
</dbReference>
<dbReference type="SMR" id="Q7MT32"/>
<dbReference type="STRING" id="242619.PG_2163"/>
<dbReference type="EnsemblBacteria" id="AAQ67113">
    <property type="protein sequence ID" value="AAQ67113"/>
    <property type="gene ID" value="PG_2163"/>
</dbReference>
<dbReference type="GeneID" id="29255453"/>
<dbReference type="KEGG" id="pgi:PG_2163"/>
<dbReference type="eggNOG" id="COG0496">
    <property type="taxonomic scope" value="Bacteria"/>
</dbReference>
<dbReference type="HOGENOM" id="CLU_045192_1_0_10"/>
<dbReference type="Proteomes" id="UP000000588">
    <property type="component" value="Chromosome"/>
</dbReference>
<dbReference type="GO" id="GO:0005737">
    <property type="term" value="C:cytoplasm"/>
    <property type="evidence" value="ECO:0007669"/>
    <property type="project" value="UniProtKB-SubCell"/>
</dbReference>
<dbReference type="GO" id="GO:0008254">
    <property type="term" value="F:3'-nucleotidase activity"/>
    <property type="evidence" value="ECO:0007669"/>
    <property type="project" value="TreeGrafter"/>
</dbReference>
<dbReference type="GO" id="GO:0008253">
    <property type="term" value="F:5'-nucleotidase activity"/>
    <property type="evidence" value="ECO:0007669"/>
    <property type="project" value="UniProtKB-UniRule"/>
</dbReference>
<dbReference type="GO" id="GO:0004309">
    <property type="term" value="F:exopolyphosphatase activity"/>
    <property type="evidence" value="ECO:0007669"/>
    <property type="project" value="TreeGrafter"/>
</dbReference>
<dbReference type="GO" id="GO:0046872">
    <property type="term" value="F:metal ion binding"/>
    <property type="evidence" value="ECO:0007669"/>
    <property type="project" value="UniProtKB-UniRule"/>
</dbReference>
<dbReference type="GO" id="GO:0000166">
    <property type="term" value="F:nucleotide binding"/>
    <property type="evidence" value="ECO:0007669"/>
    <property type="project" value="UniProtKB-KW"/>
</dbReference>
<dbReference type="Gene3D" id="3.40.1210.10">
    <property type="entry name" value="Survival protein SurE-like phosphatase/nucleotidase"/>
    <property type="match status" value="1"/>
</dbReference>
<dbReference type="HAMAP" id="MF_00060">
    <property type="entry name" value="SurE"/>
    <property type="match status" value="1"/>
</dbReference>
<dbReference type="InterPro" id="IPR030048">
    <property type="entry name" value="SurE"/>
</dbReference>
<dbReference type="InterPro" id="IPR002828">
    <property type="entry name" value="SurE-like_Pase/nucleotidase"/>
</dbReference>
<dbReference type="InterPro" id="IPR036523">
    <property type="entry name" value="SurE-like_sf"/>
</dbReference>
<dbReference type="NCBIfam" id="TIGR00087">
    <property type="entry name" value="surE"/>
    <property type="match status" value="1"/>
</dbReference>
<dbReference type="PANTHER" id="PTHR30457">
    <property type="entry name" value="5'-NUCLEOTIDASE SURE"/>
    <property type="match status" value="1"/>
</dbReference>
<dbReference type="PANTHER" id="PTHR30457:SF12">
    <property type="entry name" value="5'_3'-NUCLEOTIDASE SURE"/>
    <property type="match status" value="1"/>
</dbReference>
<dbReference type="Pfam" id="PF01975">
    <property type="entry name" value="SurE"/>
    <property type="match status" value="1"/>
</dbReference>
<dbReference type="SUPFAM" id="SSF64167">
    <property type="entry name" value="SurE-like"/>
    <property type="match status" value="1"/>
</dbReference>
<accession>Q7MT32</accession>
<gene>
    <name evidence="1" type="primary">surE</name>
    <name type="ordered locus">PG_2163</name>
</gene>
<feature type="chain" id="PRO_0000111827" description="5'-nucleotidase SurE">
    <location>
        <begin position="1"/>
        <end position="256"/>
    </location>
</feature>
<feature type="binding site" evidence="1">
    <location>
        <position position="13"/>
    </location>
    <ligand>
        <name>a divalent metal cation</name>
        <dbReference type="ChEBI" id="CHEBI:60240"/>
    </ligand>
</feature>
<feature type="binding site" evidence="1">
    <location>
        <position position="14"/>
    </location>
    <ligand>
        <name>a divalent metal cation</name>
        <dbReference type="ChEBI" id="CHEBI:60240"/>
    </ligand>
</feature>
<feature type="binding site" evidence="1">
    <location>
        <position position="44"/>
    </location>
    <ligand>
        <name>a divalent metal cation</name>
        <dbReference type="ChEBI" id="CHEBI:60240"/>
    </ligand>
</feature>
<feature type="binding site" evidence="1">
    <location>
        <position position="101"/>
    </location>
    <ligand>
        <name>a divalent metal cation</name>
        <dbReference type="ChEBI" id="CHEBI:60240"/>
    </ligand>
</feature>
<keyword id="KW-0963">Cytoplasm</keyword>
<keyword id="KW-0378">Hydrolase</keyword>
<keyword id="KW-0479">Metal-binding</keyword>
<keyword id="KW-0547">Nucleotide-binding</keyword>
<keyword id="KW-1185">Reference proteome</keyword>
<reference key="1">
    <citation type="journal article" date="2003" name="J. Bacteriol.">
        <title>Complete genome sequence of the oral pathogenic bacterium Porphyromonas gingivalis strain W83.</title>
        <authorList>
            <person name="Nelson K.E."/>
            <person name="Fleischmann R.D."/>
            <person name="DeBoy R.T."/>
            <person name="Paulsen I.T."/>
            <person name="Fouts D.E."/>
            <person name="Eisen J.A."/>
            <person name="Daugherty S.C."/>
            <person name="Dodson R.J."/>
            <person name="Durkin A.S."/>
            <person name="Gwinn M.L."/>
            <person name="Haft D.H."/>
            <person name="Kolonay J.F."/>
            <person name="Nelson W.C."/>
            <person name="Mason T.M."/>
            <person name="Tallon L."/>
            <person name="Gray J."/>
            <person name="Granger D."/>
            <person name="Tettelin H."/>
            <person name="Dong H."/>
            <person name="Galvin J.L."/>
            <person name="Duncan M.J."/>
            <person name="Dewhirst F.E."/>
            <person name="Fraser C.M."/>
        </authorList>
    </citation>
    <scope>NUCLEOTIDE SEQUENCE [LARGE SCALE GENOMIC DNA]</scope>
    <source>
        <strain>ATCC BAA-308 / W83</strain>
    </source>
</reference>
<sequence>MKADPIEILVSNDDGFRAQGIRELAEALRPLGNVTIVAPDGPRSGASAAITSTLPIKLKLRHREEGYTVYSCTGTPVDCVKLAMNTVFKERKPDLLVTGVNHGNNAGICVIYSGTVGAAMEGCVCDVPALAVSLDDHSEICDMSHATAYAVHVSRMILKNGLPQDTMLSMNVPKGKPLGLKPCAVTDGRFVDEYMASEDARGNAVYWMTGRQINKGTIEGDLELMHAGYVTLSPIKLNMTSRRYLPVLEELLKRSV</sequence>
<comment type="function">
    <text evidence="1">Nucleotidase that shows phosphatase activity on nucleoside 5'-monophosphates.</text>
</comment>
<comment type="catalytic activity">
    <reaction evidence="1">
        <text>a ribonucleoside 5'-phosphate + H2O = a ribonucleoside + phosphate</text>
        <dbReference type="Rhea" id="RHEA:12484"/>
        <dbReference type="ChEBI" id="CHEBI:15377"/>
        <dbReference type="ChEBI" id="CHEBI:18254"/>
        <dbReference type="ChEBI" id="CHEBI:43474"/>
        <dbReference type="ChEBI" id="CHEBI:58043"/>
        <dbReference type="EC" id="3.1.3.5"/>
    </reaction>
</comment>
<comment type="cofactor">
    <cofactor evidence="1">
        <name>a divalent metal cation</name>
        <dbReference type="ChEBI" id="CHEBI:60240"/>
    </cofactor>
    <text evidence="1">Binds 1 divalent metal cation per subunit.</text>
</comment>
<comment type="subcellular location">
    <subcellularLocation>
        <location evidence="1">Cytoplasm</location>
    </subcellularLocation>
</comment>
<comment type="similarity">
    <text evidence="1">Belongs to the SurE nucleotidase family.</text>
</comment>
<protein>
    <recommendedName>
        <fullName evidence="1">5'-nucleotidase SurE</fullName>
        <ecNumber evidence="1">3.1.3.5</ecNumber>
    </recommendedName>
    <alternativeName>
        <fullName evidence="1">Nucleoside 5'-monophosphate phosphohydrolase</fullName>
    </alternativeName>
</protein>
<name>SURE_PORGI</name>
<evidence type="ECO:0000255" key="1">
    <source>
        <dbReference type="HAMAP-Rule" id="MF_00060"/>
    </source>
</evidence>